<accession>Q65D22</accession>
<accession>Q62NJ8</accession>
<comment type="function">
    <text evidence="1">Catalyzes a reversible aldol reaction between acetaldehyde and D-glyceraldehyde 3-phosphate to generate 2-deoxy-D-ribose 5-phosphate.</text>
</comment>
<comment type="catalytic activity">
    <reaction evidence="1">
        <text>2-deoxy-D-ribose 5-phosphate = D-glyceraldehyde 3-phosphate + acetaldehyde</text>
        <dbReference type="Rhea" id="RHEA:12821"/>
        <dbReference type="ChEBI" id="CHEBI:15343"/>
        <dbReference type="ChEBI" id="CHEBI:59776"/>
        <dbReference type="ChEBI" id="CHEBI:62877"/>
        <dbReference type="EC" id="4.1.2.4"/>
    </reaction>
</comment>
<comment type="pathway">
    <text evidence="1">Carbohydrate degradation; 2-deoxy-D-ribose 1-phosphate degradation; D-glyceraldehyde 3-phosphate and acetaldehyde from 2-deoxy-alpha-D-ribose 1-phosphate: step 2/2.</text>
</comment>
<comment type="subcellular location">
    <subcellularLocation>
        <location evidence="1">Cytoplasm</location>
    </subcellularLocation>
</comment>
<comment type="similarity">
    <text evidence="1">Belongs to the DeoC/FbaB aldolase family. DeoC type 1 subfamily.</text>
</comment>
<dbReference type="EC" id="4.1.2.4" evidence="1"/>
<dbReference type="EMBL" id="AE017333">
    <property type="protein sequence ID" value="AAU43042.1"/>
    <property type="molecule type" value="Genomic_DNA"/>
</dbReference>
<dbReference type="EMBL" id="CP000002">
    <property type="protein sequence ID" value="AAU25663.1"/>
    <property type="molecule type" value="Genomic_DNA"/>
</dbReference>
<dbReference type="RefSeq" id="WP_011198451.1">
    <property type="nucleotide sequence ID" value="NC_006322.1"/>
</dbReference>
<dbReference type="SMR" id="Q65D22"/>
<dbReference type="STRING" id="279010.BL00229"/>
<dbReference type="GeneID" id="92859201"/>
<dbReference type="KEGG" id="bld:BLi04229"/>
<dbReference type="KEGG" id="bli:BL00229"/>
<dbReference type="eggNOG" id="COG0274">
    <property type="taxonomic scope" value="Bacteria"/>
</dbReference>
<dbReference type="HOGENOM" id="CLU_053595_0_1_9"/>
<dbReference type="UniPathway" id="UPA00002">
    <property type="reaction ID" value="UER00468"/>
</dbReference>
<dbReference type="Proteomes" id="UP000000606">
    <property type="component" value="Chromosome"/>
</dbReference>
<dbReference type="GO" id="GO:0005737">
    <property type="term" value="C:cytoplasm"/>
    <property type="evidence" value="ECO:0007669"/>
    <property type="project" value="UniProtKB-SubCell"/>
</dbReference>
<dbReference type="GO" id="GO:0004139">
    <property type="term" value="F:deoxyribose-phosphate aldolase activity"/>
    <property type="evidence" value="ECO:0007669"/>
    <property type="project" value="UniProtKB-UniRule"/>
</dbReference>
<dbReference type="GO" id="GO:0006018">
    <property type="term" value="P:2-deoxyribose 1-phosphate catabolic process"/>
    <property type="evidence" value="ECO:0007669"/>
    <property type="project" value="UniProtKB-UniRule"/>
</dbReference>
<dbReference type="GO" id="GO:0016052">
    <property type="term" value="P:carbohydrate catabolic process"/>
    <property type="evidence" value="ECO:0007669"/>
    <property type="project" value="TreeGrafter"/>
</dbReference>
<dbReference type="GO" id="GO:0009264">
    <property type="term" value="P:deoxyribonucleotide catabolic process"/>
    <property type="evidence" value="ECO:0007669"/>
    <property type="project" value="InterPro"/>
</dbReference>
<dbReference type="CDD" id="cd00959">
    <property type="entry name" value="DeoC"/>
    <property type="match status" value="1"/>
</dbReference>
<dbReference type="FunFam" id="3.20.20.70:FF:000044">
    <property type="entry name" value="Deoxyribose-phosphate aldolase"/>
    <property type="match status" value="1"/>
</dbReference>
<dbReference type="Gene3D" id="3.20.20.70">
    <property type="entry name" value="Aldolase class I"/>
    <property type="match status" value="1"/>
</dbReference>
<dbReference type="HAMAP" id="MF_00114">
    <property type="entry name" value="DeoC_type1"/>
    <property type="match status" value="1"/>
</dbReference>
<dbReference type="InterPro" id="IPR013785">
    <property type="entry name" value="Aldolase_TIM"/>
</dbReference>
<dbReference type="InterPro" id="IPR011343">
    <property type="entry name" value="DeoC"/>
</dbReference>
<dbReference type="InterPro" id="IPR002915">
    <property type="entry name" value="DeoC/FbaB/LacD_aldolase"/>
</dbReference>
<dbReference type="InterPro" id="IPR028581">
    <property type="entry name" value="DeoC_typeI"/>
</dbReference>
<dbReference type="NCBIfam" id="TIGR00126">
    <property type="entry name" value="deoC"/>
    <property type="match status" value="1"/>
</dbReference>
<dbReference type="PANTHER" id="PTHR10889">
    <property type="entry name" value="DEOXYRIBOSE-PHOSPHATE ALDOLASE"/>
    <property type="match status" value="1"/>
</dbReference>
<dbReference type="PANTHER" id="PTHR10889:SF1">
    <property type="entry name" value="DEOXYRIBOSE-PHOSPHATE ALDOLASE"/>
    <property type="match status" value="1"/>
</dbReference>
<dbReference type="Pfam" id="PF01791">
    <property type="entry name" value="DeoC"/>
    <property type="match status" value="1"/>
</dbReference>
<dbReference type="PIRSF" id="PIRSF001357">
    <property type="entry name" value="DeoC"/>
    <property type="match status" value="1"/>
</dbReference>
<dbReference type="SMART" id="SM01133">
    <property type="entry name" value="DeoC"/>
    <property type="match status" value="1"/>
</dbReference>
<dbReference type="SUPFAM" id="SSF51569">
    <property type="entry name" value="Aldolase"/>
    <property type="match status" value="1"/>
</dbReference>
<organism>
    <name type="scientific">Bacillus licheniformis (strain ATCC 14580 / DSM 13 / JCM 2505 / CCUG 7422 / NBRC 12200 / NCIMB 9375 / NCTC 10341 / NRRL NRS-1264 / Gibson 46)</name>
    <dbReference type="NCBI Taxonomy" id="279010"/>
    <lineage>
        <taxon>Bacteria</taxon>
        <taxon>Bacillati</taxon>
        <taxon>Bacillota</taxon>
        <taxon>Bacilli</taxon>
        <taxon>Bacillales</taxon>
        <taxon>Bacillaceae</taxon>
        <taxon>Bacillus</taxon>
    </lineage>
</organism>
<protein>
    <recommendedName>
        <fullName evidence="1">Deoxyribose-phosphate aldolase 2</fullName>
        <shortName evidence="1">DERA 2</shortName>
        <ecNumber evidence="1">4.1.2.4</ecNumber>
    </recommendedName>
    <alternativeName>
        <fullName evidence="1">2-deoxy-D-ribose 5-phosphate aldolase 2</fullName>
    </alternativeName>
    <alternativeName>
        <fullName evidence="1">Phosphodeoxyriboaldolase 2</fullName>
        <shortName evidence="1">Deoxyriboaldolase 2</shortName>
    </alternativeName>
</protein>
<name>DEOC2_BACLD</name>
<sequence>MTIANLIDHTALKPHTQKSEIKKLIEEAKAYQFASVCVNPTWVEFAAEELKGTEIDVCTVIGFPLGANTTETKAFETKDAIAKGATEVDMVINIAALKDGNDDFVEADIRAVVEAAKGKALVKVIIETCLLTDEEKERACRLAVAAGADFVKTSTGFSTGGATAEDIALMRKTVGPDIGVKASGGIRTKEDVETMISNGATRIGASAGVSIVSGAEGKNEDNY</sequence>
<gene>
    <name evidence="1" type="primary">deoC2</name>
    <name type="synonym">deoC</name>
    <name type="synonym">dra</name>
    <name type="ordered locus">BLi04229</name>
    <name type="ordered locus">BL00229</name>
</gene>
<proteinExistence type="inferred from homology"/>
<evidence type="ECO:0000255" key="1">
    <source>
        <dbReference type="HAMAP-Rule" id="MF_00114"/>
    </source>
</evidence>
<keyword id="KW-0963">Cytoplasm</keyword>
<keyword id="KW-0456">Lyase</keyword>
<keyword id="KW-1185">Reference proteome</keyword>
<keyword id="KW-0704">Schiff base</keyword>
<feature type="chain" id="PRO_0000231532" description="Deoxyribose-phosphate aldolase 2">
    <location>
        <begin position="1"/>
        <end position="223"/>
    </location>
</feature>
<feature type="active site" description="Proton donor/acceptor" evidence="1">
    <location>
        <position position="89"/>
    </location>
</feature>
<feature type="active site" description="Schiff-base intermediate with acetaldehyde" evidence="1">
    <location>
        <position position="152"/>
    </location>
</feature>
<feature type="active site" description="Proton donor/acceptor" evidence="1">
    <location>
        <position position="181"/>
    </location>
</feature>
<reference key="1">
    <citation type="journal article" date="2004" name="J. Mol. Microbiol. Biotechnol.">
        <title>The complete genome sequence of Bacillus licheniformis DSM13, an organism with great industrial potential.</title>
        <authorList>
            <person name="Veith B."/>
            <person name="Herzberg C."/>
            <person name="Steckel S."/>
            <person name="Feesche J."/>
            <person name="Maurer K.H."/>
            <person name="Ehrenreich P."/>
            <person name="Baeumer S."/>
            <person name="Henne A."/>
            <person name="Liesegang H."/>
            <person name="Merkl R."/>
            <person name="Ehrenreich A."/>
            <person name="Gottschalk G."/>
        </authorList>
    </citation>
    <scope>NUCLEOTIDE SEQUENCE [LARGE SCALE GENOMIC DNA]</scope>
    <source>
        <strain>ATCC 14580 / DSM 13 / JCM 2505 / CCUG 7422 / NBRC 12200 / NCIMB 9375 / NCTC 10341 / NRRL NRS-1264 / Gibson 46</strain>
    </source>
</reference>
<reference key="2">
    <citation type="journal article" date="2004" name="Genome Biol.">
        <title>Complete genome sequence of the industrial bacterium Bacillus licheniformis and comparisons with closely related Bacillus species.</title>
        <authorList>
            <person name="Rey M.W."/>
            <person name="Ramaiya P."/>
            <person name="Nelson B.A."/>
            <person name="Brody-Karpin S.D."/>
            <person name="Zaretsky E.J."/>
            <person name="Tang M."/>
            <person name="Lopez de Leon A."/>
            <person name="Xiang H."/>
            <person name="Gusti V."/>
            <person name="Clausen I.G."/>
            <person name="Olsen P.B."/>
            <person name="Rasmussen M.D."/>
            <person name="Andersen J.T."/>
            <person name="Joergensen P.L."/>
            <person name="Larsen T.S."/>
            <person name="Sorokin A."/>
            <person name="Bolotin A."/>
            <person name="Lapidus A."/>
            <person name="Galleron N."/>
            <person name="Ehrlich S.D."/>
            <person name="Berka R.M."/>
        </authorList>
    </citation>
    <scope>NUCLEOTIDE SEQUENCE [LARGE SCALE GENOMIC DNA]</scope>
    <source>
        <strain>ATCC 14580 / DSM 13 / JCM 2505 / CCUG 7422 / NBRC 12200 / NCIMB 9375 / NCTC 10341 / NRRL NRS-1264 / Gibson 46</strain>
    </source>
</reference>